<reference key="1">
    <citation type="journal article" date="1997" name="Mol. Microbiol.">
        <title>Analysis of the DNA sequence, gene expression, origin of replication and modular structure of the Lactococcus lactis lytic bacteriophage sk1.</title>
        <authorList>
            <person name="Chandry P.S."/>
            <person name="Moore S.C."/>
            <person name="Boyce J.D."/>
            <person name="Davidson B.E."/>
            <person name="Hillier A.J."/>
        </authorList>
    </citation>
    <scope>NUCLEOTIDE SEQUENCE [LARGE SCALE GENOMIC DNA]</scope>
</reference>
<accession>O21883</accession>
<sequence length="298" mass="34373">MVRQYKIHTNLDGTDDKVLDVTNGKVRLYQPSNLGLQSTNNIWQSNGIGVMGKRSITQPQIEFKLETFGESLEENYQLMKDFVNDILSKKFVTLEYQTEIFQVYADLALADVTKTEGYGKNGTFSEKITFDIITKWYTYENLTFDKIENGKVIAGMSKVYGGTELGGYKYIEGTSYTYYGETNIERLSRWDIKDEIFSFMGILYPQLPKTPAGVRFLDDTGNEYTAIVFKTEQAQDYILINTDVNDEVYQGWNGTTSLNLFPVMDFERYRTRIIEKGQMELINLSKAEFKIKRKADFV</sequence>
<protein>
    <recommendedName>
        <fullName>Distal tail protein</fullName>
        <shortName>Dit</shortName>
    </recommendedName>
    <alternativeName>
        <fullName>Gene product 15</fullName>
        <shortName>Gp15</shortName>
    </alternativeName>
</protein>
<keyword id="KW-1185">Reference proteome</keyword>
<keyword id="KW-1171">Viral genome ejection through host cell envelope</keyword>
<keyword id="KW-1243">Viral long flexible tail ejection system</keyword>
<keyword id="KW-1162">Viral penetration into host cytoplasm</keyword>
<keyword id="KW-1227">Viral tail protein</keyword>
<keyword id="KW-0946">Virion</keyword>
<keyword id="KW-1160">Virus entry into host cell</keyword>
<name>DIT_BPLSK</name>
<comment type="function">
    <text evidence="1">Forms the distal part of the tail. Self-associates as two rings organized back to back, with a central channel allowing DNA ejection.</text>
</comment>
<comment type="subunit">
    <text evidence="1">Homohexamer. Interacts with the receptor binding protein.</text>
</comment>
<comment type="subcellular location">
    <subcellularLocation>
        <location evidence="1">Virion</location>
    </subcellularLocation>
    <text evidence="1">Part of the tail.</text>
</comment>
<comment type="similarity">
    <text evidence="2">Belongs to the skunalikevirus distal tail protein family.</text>
</comment>
<organism>
    <name type="scientific">Lactococcus phage SK1</name>
    <name type="common">Lactococcus lactis bacteriophage SK1</name>
    <dbReference type="NCBI Taxonomy" id="2905675"/>
    <lineage>
        <taxon>Viruses</taxon>
        <taxon>Duplodnaviria</taxon>
        <taxon>Heunggongvirae</taxon>
        <taxon>Uroviricota</taxon>
        <taxon>Caudoviricetes</taxon>
        <taxon>Skunavirus</taxon>
        <taxon>Skunavirus sk1</taxon>
    </lineage>
</organism>
<dbReference type="EMBL" id="AF011378">
    <property type="protein sequence ID" value="AAB70054.1"/>
    <property type="molecule type" value="Genomic_DNA"/>
</dbReference>
<dbReference type="RefSeq" id="NP_044961.1">
    <property type="nucleotide sequence ID" value="NC_001835.1"/>
</dbReference>
<dbReference type="SMR" id="O21883"/>
<dbReference type="GeneID" id="1261288"/>
<dbReference type="KEGG" id="vg:1261288"/>
<dbReference type="Proteomes" id="UP000000839">
    <property type="component" value="Genome"/>
</dbReference>
<dbReference type="GO" id="GO:0098015">
    <property type="term" value="C:virus tail"/>
    <property type="evidence" value="ECO:0007669"/>
    <property type="project" value="UniProtKB-KW"/>
</dbReference>
<dbReference type="GO" id="GO:0099001">
    <property type="term" value="P:symbiont genome ejection through host cell envelope, long flexible tail mechanism"/>
    <property type="evidence" value="ECO:0007669"/>
    <property type="project" value="UniProtKB-KW"/>
</dbReference>
<dbReference type="Gene3D" id="2.40.30.210">
    <property type="match status" value="2"/>
</dbReference>
<dbReference type="Gene3D" id="2.60.120.880">
    <property type="match status" value="1"/>
</dbReference>
<dbReference type="InterPro" id="IPR048272">
    <property type="entry name" value="Dit_C"/>
</dbReference>
<dbReference type="InterPro" id="IPR031899">
    <property type="entry name" value="Dit_N"/>
</dbReference>
<dbReference type="Pfam" id="PF21766">
    <property type="entry name" value="Dit_C"/>
    <property type="match status" value="1"/>
</dbReference>
<dbReference type="Pfam" id="PF16774">
    <property type="entry name" value="Dit_N"/>
    <property type="match status" value="1"/>
</dbReference>
<feature type="chain" id="PRO_0000438256" description="Distal tail protein">
    <location>
        <begin position="1"/>
        <end position="298"/>
    </location>
</feature>
<proteinExistence type="inferred from homology"/>
<evidence type="ECO:0000250" key="1">
    <source>
        <dbReference type="UniProtKB" id="D3WAD3"/>
    </source>
</evidence>
<evidence type="ECO:0000305" key="2"/>
<organismHost>
    <name type="scientific">Lactococcus lactis</name>
    <dbReference type="NCBI Taxonomy" id="1358"/>
</organismHost>